<gene>
    <name evidence="1" type="primary">mntH</name>
    <name type="ordered locus">ECUMN_2721</name>
</gene>
<proteinExistence type="inferred from homology"/>
<organism>
    <name type="scientific">Escherichia coli O17:K52:H18 (strain UMN026 / ExPEC)</name>
    <dbReference type="NCBI Taxonomy" id="585056"/>
    <lineage>
        <taxon>Bacteria</taxon>
        <taxon>Pseudomonadati</taxon>
        <taxon>Pseudomonadota</taxon>
        <taxon>Gammaproteobacteria</taxon>
        <taxon>Enterobacterales</taxon>
        <taxon>Enterobacteriaceae</taxon>
        <taxon>Escherichia</taxon>
    </lineage>
</organism>
<feature type="chain" id="PRO_1000191748" description="Divalent metal cation transporter MntH">
    <location>
        <begin position="1"/>
        <end position="412"/>
    </location>
</feature>
<feature type="topological domain" description="Cytoplasmic" evidence="1">
    <location>
        <begin position="1"/>
        <end position="19"/>
    </location>
</feature>
<feature type="transmembrane region" description="Helical" evidence="1">
    <location>
        <begin position="20"/>
        <end position="39"/>
    </location>
</feature>
<feature type="topological domain" description="Periplasmic" evidence="1">
    <location>
        <begin position="40"/>
        <end position="51"/>
    </location>
</feature>
<feature type="transmembrane region" description="Helical" evidence="1">
    <location>
        <begin position="52"/>
        <end position="71"/>
    </location>
</feature>
<feature type="topological domain" description="Cytoplasmic" evidence="1">
    <location>
        <begin position="72"/>
        <end position="95"/>
    </location>
</feature>
<feature type="transmembrane region" description="Helical" evidence="1">
    <location>
        <begin position="96"/>
        <end position="118"/>
    </location>
</feature>
<feature type="topological domain" description="Periplasmic" evidence="1">
    <location>
        <begin position="119"/>
        <end position="125"/>
    </location>
</feature>
<feature type="transmembrane region" description="Helical" evidence="1">
    <location>
        <begin position="126"/>
        <end position="145"/>
    </location>
</feature>
<feature type="topological domain" description="Cytoplasmic" evidence="1">
    <location>
        <begin position="146"/>
        <end position="155"/>
    </location>
</feature>
<feature type="transmembrane region" description="Helical" evidence="1">
    <location>
        <begin position="156"/>
        <end position="175"/>
    </location>
</feature>
<feature type="topological domain" description="Periplasmic" evidence="1">
    <location>
        <begin position="176"/>
        <end position="196"/>
    </location>
</feature>
<feature type="transmembrane region" description="Helical" evidence="1">
    <location>
        <begin position="197"/>
        <end position="220"/>
    </location>
</feature>
<feature type="topological domain" description="Cytoplasmic" evidence="1">
    <location>
        <begin position="221"/>
        <end position="238"/>
    </location>
</feature>
<feature type="transmembrane region" description="Helical" evidence="1">
    <location>
        <begin position="239"/>
        <end position="258"/>
    </location>
</feature>
<feature type="topological domain" description="Periplasmic" evidence="1">
    <location>
        <begin position="259"/>
        <end position="276"/>
    </location>
</feature>
<feature type="transmembrane region" description="Helical" evidence="1">
    <location>
        <begin position="277"/>
        <end position="297"/>
    </location>
</feature>
<feature type="topological domain" description="Cytoplasmic" evidence="1">
    <location>
        <begin position="298"/>
        <end position="327"/>
    </location>
</feature>
<feature type="transmembrane region" description="Helical" evidence="1">
    <location>
        <begin position="328"/>
        <end position="344"/>
    </location>
</feature>
<feature type="topological domain" description="Periplasmic" evidence="1">
    <location>
        <begin position="345"/>
        <end position="350"/>
    </location>
</feature>
<feature type="transmembrane region" description="Helical" evidence="1">
    <location>
        <begin position="351"/>
        <end position="370"/>
    </location>
</feature>
<feature type="topological domain" description="Cytoplasmic" evidence="1">
    <location>
        <begin position="371"/>
        <end position="387"/>
    </location>
</feature>
<feature type="transmembrane region" description="Helical" evidence="1">
    <location>
        <begin position="388"/>
        <end position="406"/>
    </location>
</feature>
<feature type="topological domain" description="Periplasmic" evidence="1">
    <location>
        <begin position="407"/>
        <end position="412"/>
    </location>
</feature>
<keyword id="KW-0997">Cell inner membrane</keyword>
<keyword id="KW-1003">Cell membrane</keyword>
<keyword id="KW-0406">Ion transport</keyword>
<keyword id="KW-0472">Membrane</keyword>
<keyword id="KW-0769">Symport</keyword>
<keyword id="KW-0812">Transmembrane</keyword>
<keyword id="KW-1133">Transmembrane helix</keyword>
<keyword id="KW-0813">Transport</keyword>
<reference key="1">
    <citation type="journal article" date="2009" name="PLoS Genet.">
        <title>Organised genome dynamics in the Escherichia coli species results in highly diverse adaptive paths.</title>
        <authorList>
            <person name="Touchon M."/>
            <person name="Hoede C."/>
            <person name="Tenaillon O."/>
            <person name="Barbe V."/>
            <person name="Baeriswyl S."/>
            <person name="Bidet P."/>
            <person name="Bingen E."/>
            <person name="Bonacorsi S."/>
            <person name="Bouchier C."/>
            <person name="Bouvet O."/>
            <person name="Calteau A."/>
            <person name="Chiapello H."/>
            <person name="Clermont O."/>
            <person name="Cruveiller S."/>
            <person name="Danchin A."/>
            <person name="Diard M."/>
            <person name="Dossat C."/>
            <person name="Karoui M.E."/>
            <person name="Frapy E."/>
            <person name="Garry L."/>
            <person name="Ghigo J.M."/>
            <person name="Gilles A.M."/>
            <person name="Johnson J."/>
            <person name="Le Bouguenec C."/>
            <person name="Lescat M."/>
            <person name="Mangenot S."/>
            <person name="Martinez-Jehanne V."/>
            <person name="Matic I."/>
            <person name="Nassif X."/>
            <person name="Oztas S."/>
            <person name="Petit M.A."/>
            <person name="Pichon C."/>
            <person name="Rouy Z."/>
            <person name="Ruf C.S."/>
            <person name="Schneider D."/>
            <person name="Tourret J."/>
            <person name="Vacherie B."/>
            <person name="Vallenet D."/>
            <person name="Medigue C."/>
            <person name="Rocha E.P.C."/>
            <person name="Denamur E."/>
        </authorList>
    </citation>
    <scope>NUCLEOTIDE SEQUENCE [LARGE SCALE GENOMIC DNA]</scope>
    <source>
        <strain>UMN026 / ExPEC</strain>
    </source>
</reference>
<comment type="function">
    <text evidence="1">H(+)-stimulated, divalent metal cation uptake system.</text>
</comment>
<comment type="subcellular location">
    <subcellularLocation>
        <location evidence="1">Cell inner membrane</location>
        <topology evidence="1">Multi-pass membrane protein</topology>
    </subcellularLocation>
</comment>
<comment type="similarity">
    <text evidence="1">Belongs to the NRAMP family.</text>
</comment>
<dbReference type="EMBL" id="CU928163">
    <property type="protein sequence ID" value="CAR13901.1"/>
    <property type="molecule type" value="Genomic_DNA"/>
</dbReference>
<dbReference type="RefSeq" id="WP_000186369.1">
    <property type="nucleotide sequence ID" value="NC_011751.1"/>
</dbReference>
<dbReference type="RefSeq" id="YP_002413428.1">
    <property type="nucleotide sequence ID" value="NC_011751.1"/>
</dbReference>
<dbReference type="SMR" id="B7N5Z2"/>
<dbReference type="STRING" id="585056.ECUMN_2721"/>
<dbReference type="KEGG" id="eum:ECUMN_2721"/>
<dbReference type="PATRIC" id="fig|585056.7.peg.2903"/>
<dbReference type="HOGENOM" id="CLU_020088_2_0_6"/>
<dbReference type="Proteomes" id="UP000007097">
    <property type="component" value="Chromosome"/>
</dbReference>
<dbReference type="GO" id="GO:0005886">
    <property type="term" value="C:plasma membrane"/>
    <property type="evidence" value="ECO:0007669"/>
    <property type="project" value="UniProtKB-SubCell"/>
</dbReference>
<dbReference type="GO" id="GO:0015086">
    <property type="term" value="F:cadmium ion transmembrane transporter activity"/>
    <property type="evidence" value="ECO:0007669"/>
    <property type="project" value="TreeGrafter"/>
</dbReference>
<dbReference type="GO" id="GO:0005384">
    <property type="term" value="F:manganese ion transmembrane transporter activity"/>
    <property type="evidence" value="ECO:0007669"/>
    <property type="project" value="TreeGrafter"/>
</dbReference>
<dbReference type="GO" id="GO:0046872">
    <property type="term" value="F:metal ion binding"/>
    <property type="evidence" value="ECO:0007669"/>
    <property type="project" value="UniProtKB-UniRule"/>
</dbReference>
<dbReference type="GO" id="GO:0015293">
    <property type="term" value="F:symporter activity"/>
    <property type="evidence" value="ECO:0007669"/>
    <property type="project" value="UniProtKB-UniRule"/>
</dbReference>
<dbReference type="GO" id="GO:0034755">
    <property type="term" value="P:iron ion transmembrane transport"/>
    <property type="evidence" value="ECO:0007669"/>
    <property type="project" value="TreeGrafter"/>
</dbReference>
<dbReference type="HAMAP" id="MF_00221">
    <property type="entry name" value="NRAMP"/>
    <property type="match status" value="1"/>
</dbReference>
<dbReference type="InterPro" id="IPR001046">
    <property type="entry name" value="NRAMP_fam"/>
</dbReference>
<dbReference type="NCBIfam" id="TIGR01197">
    <property type="entry name" value="nramp"/>
    <property type="match status" value="1"/>
</dbReference>
<dbReference type="NCBIfam" id="NF037982">
    <property type="entry name" value="Nramp_1"/>
    <property type="match status" value="1"/>
</dbReference>
<dbReference type="NCBIfam" id="NF001923">
    <property type="entry name" value="PRK00701.1"/>
    <property type="match status" value="1"/>
</dbReference>
<dbReference type="PANTHER" id="PTHR11706:SF33">
    <property type="entry name" value="NATURAL RESISTANCE-ASSOCIATED MACROPHAGE PROTEIN 2"/>
    <property type="match status" value="1"/>
</dbReference>
<dbReference type="PANTHER" id="PTHR11706">
    <property type="entry name" value="SOLUTE CARRIER PROTEIN FAMILY 11 MEMBER"/>
    <property type="match status" value="1"/>
</dbReference>
<dbReference type="Pfam" id="PF01566">
    <property type="entry name" value="Nramp"/>
    <property type="match status" value="1"/>
</dbReference>
<dbReference type="PRINTS" id="PR00447">
    <property type="entry name" value="NATRESASSCMP"/>
</dbReference>
<sequence>MTNYRVESSSGRAARKMRLALMGPAFIAAIGYIDPGNFATNIQAGASFGYQLLWVVVWANLMAMLIQILSAKLGIATGKNLAEQIRDHYPRPVVWFYWVQAEIIAMATDLAEFIGAAIGFKLILGVSLLQGAVLTGIATFLILMLQRRGQKPLEKVIGGLLLFVAAAYIVELIFSQPNLAQLGKGMVIPSLPTSEAVFLAAGVLGATIMPHVIYLHSSLTQHLHGGSRQQRYSATKWDVAIAMTIAGFVNLAMMATAAAAFHFSGHTGVADLDEAYLTLQPLLSHAAATVFGLSLVAAGLSSTVVGTLAGQVVMQGFIRFHIPLWVRRTVTMLPSFIVILMGLDPTRILVMSQVLLSFGIALALVPLLIFTSDSKLMGDLVNSKRVKQTGWVIVVLVVALNIWLLVGTALGL</sequence>
<accession>B7N5Z2</accession>
<protein>
    <recommendedName>
        <fullName evidence="1">Divalent metal cation transporter MntH</fullName>
    </recommendedName>
</protein>
<evidence type="ECO:0000255" key="1">
    <source>
        <dbReference type="HAMAP-Rule" id="MF_00221"/>
    </source>
</evidence>
<name>MNTH_ECOLU</name>